<keyword id="KW-0233">DNA recombination</keyword>
<keyword id="KW-1185">Reference proteome</keyword>
<keyword id="KW-0814">Transposable element</keyword>
<keyword id="KW-0815">Transposition</keyword>
<organism>
    <name type="scientific">Escherichia coli (strain K12)</name>
    <dbReference type="NCBI Taxonomy" id="83333"/>
    <lineage>
        <taxon>Bacteria</taxon>
        <taxon>Pseudomonadati</taxon>
        <taxon>Pseudomonadota</taxon>
        <taxon>Gammaproteobacteria</taxon>
        <taxon>Enterobacterales</taxon>
        <taxon>Enterobacteriaceae</taxon>
        <taxon>Escherichia</taxon>
    </lineage>
</organism>
<name>INSB5_ECOLI</name>
<reference key="1">
    <citation type="journal article" date="1997" name="Science">
        <title>The complete genome sequence of Escherichia coli K-12.</title>
        <authorList>
            <person name="Blattner F.R."/>
            <person name="Plunkett G. III"/>
            <person name="Bloch C.A."/>
            <person name="Perna N.T."/>
            <person name="Burland V."/>
            <person name="Riley M."/>
            <person name="Collado-Vides J."/>
            <person name="Glasner J.D."/>
            <person name="Rode C.K."/>
            <person name="Mayhew G.F."/>
            <person name="Gregor J."/>
            <person name="Davis N.W."/>
            <person name="Kirkpatrick H.A."/>
            <person name="Goeden M.A."/>
            <person name="Rose D.J."/>
            <person name="Mau B."/>
            <person name="Shao Y."/>
        </authorList>
    </citation>
    <scope>NUCLEOTIDE SEQUENCE [LARGE SCALE GENOMIC DNA]</scope>
    <source>
        <strain>K12 / MG1655 / ATCC 47076</strain>
    </source>
</reference>
<proteinExistence type="inferred from homology"/>
<feature type="chain" id="PRO_0000393403" description="Insertion element IS1 5 protein InsB">
    <location>
        <begin position="1"/>
        <end position="167"/>
    </location>
</feature>
<gene>
    <name type="primary">insB5</name>
    <name type="ordered locus">b1893</name>
</gene>
<dbReference type="EMBL" id="U00096">
    <property type="protein sequence ID" value="AAC74963.1"/>
    <property type="molecule type" value="Genomic_DNA"/>
</dbReference>
<dbReference type="RefSeq" id="NP_416407.1">
    <property type="nucleotide sequence ID" value="NC_000913.3"/>
</dbReference>
<dbReference type="FunCoup" id="P0CF28">
    <property type="interactions" value="6"/>
</dbReference>
<dbReference type="EnsemblBacteria" id="AAC74963">
    <property type="protein sequence ID" value="AAC74963"/>
    <property type="gene ID" value="b1893"/>
</dbReference>
<dbReference type="GeneID" id="945867"/>
<dbReference type="KEGG" id="eco:b0021"/>
<dbReference type="KEGG" id="eco:b1893"/>
<dbReference type="KEGG" id="eco:b3445"/>
<dbReference type="KEGG" id="ecoc:C3026_17555"/>
<dbReference type="KEGG" id="ecoc:C3026_18660"/>
<dbReference type="EchoBASE" id="EB4756"/>
<dbReference type="InParanoid" id="P0CF28"/>
<dbReference type="OMA" id="VEICRAD"/>
<dbReference type="PhylomeDB" id="P0CF28"/>
<dbReference type="BioCyc" id="EcoCyc:MONOMER0-4445"/>
<dbReference type="PRO" id="PR:P0CF28"/>
<dbReference type="Proteomes" id="UP000000625">
    <property type="component" value="Chromosome"/>
</dbReference>
<dbReference type="GO" id="GO:0003677">
    <property type="term" value="F:DNA binding"/>
    <property type="evidence" value="ECO:0007669"/>
    <property type="project" value="InterPro"/>
</dbReference>
<dbReference type="GO" id="GO:0004803">
    <property type="term" value="F:transposase activity"/>
    <property type="evidence" value="ECO:0007669"/>
    <property type="project" value="InterPro"/>
</dbReference>
<dbReference type="GO" id="GO:0006313">
    <property type="term" value="P:DNA transposition"/>
    <property type="evidence" value="ECO:0000318"/>
    <property type="project" value="GO_Central"/>
</dbReference>
<dbReference type="InterPro" id="IPR005063">
    <property type="entry name" value="Transposase_27"/>
</dbReference>
<dbReference type="InterPro" id="IPR051354">
    <property type="entry name" value="Transposase_27_IS1"/>
</dbReference>
<dbReference type="NCBIfam" id="NF033558">
    <property type="entry name" value="transpos_IS1"/>
    <property type="match status" value="1"/>
</dbReference>
<dbReference type="PANTHER" id="PTHR33293">
    <property type="entry name" value="INSERTION ELEMENT IS1 1 PROTEIN INSB-RELATED"/>
    <property type="match status" value="1"/>
</dbReference>
<dbReference type="PANTHER" id="PTHR33293:SF1">
    <property type="entry name" value="INSERTION ELEMENT IS1 1 PROTEIN INSB-RELATED"/>
    <property type="match status" value="1"/>
</dbReference>
<dbReference type="Pfam" id="PF03400">
    <property type="entry name" value="DDE_Tnp_IS1"/>
    <property type="match status" value="1"/>
</dbReference>
<sequence length="167" mass="19565">MPGNSPHYGRWPQHDFTSLKKLRPQSVTSRIQPGSDVIVCAEMDEQWGYVGAKSRQRWLFYAYDSLRKTVVAHVFGERTMATLGRLMSLLSPFDVVIWMTDGWPLYESRLKGKLHVISKRYTQRIERHNLNLRQHLARLGRKSLSFSKSVELHDKVIGHYLNIKHYQ</sequence>
<protein>
    <recommendedName>
        <fullName>Insertion element IS1 5 protein InsB</fullName>
    </recommendedName>
    <alternativeName>
        <fullName>IS1h</fullName>
    </alternativeName>
</protein>
<evidence type="ECO:0000305" key="1"/>
<comment type="function">
    <text>Absolutely required for transposition of IS1.</text>
</comment>
<comment type="similarity">
    <text evidence="1">Belongs to the transposase 27 family.</text>
</comment>
<comment type="caution">
    <text evidence="1">There is no equivalent of this gene in strain K12 / W3110.</text>
</comment>
<accession>P0CF28</accession>
<accession>P03830</accession>
<accession>P77707</accession>
<accession>Q2MCH3</accession>